<accession>Q50315</accession>
<gene>
    <name type="ordered locus">MPN_687</name>
    <name type="ORF">K05_orf250</name>
    <name type="ORF">MP155</name>
</gene>
<dbReference type="EMBL" id="U34816">
    <property type="protein sequence ID" value="AAC43647.1"/>
    <property type="molecule type" value="Genomic_DNA"/>
</dbReference>
<dbReference type="EMBL" id="U00089">
    <property type="protein sequence ID" value="AAB95803.1"/>
    <property type="molecule type" value="Genomic_DNA"/>
</dbReference>
<dbReference type="PIR" id="S62838">
    <property type="entry name" value="S62838"/>
</dbReference>
<dbReference type="RefSeq" id="NP_110376.1">
    <property type="nucleotide sequence ID" value="NC_000912.1"/>
</dbReference>
<dbReference type="RefSeq" id="WP_010875044.1">
    <property type="nucleotide sequence ID" value="NZ_OU342337.1"/>
</dbReference>
<dbReference type="SMR" id="Q50315"/>
<dbReference type="STRING" id="272634.MPN_687"/>
<dbReference type="EnsemblBacteria" id="AAB95803">
    <property type="protein sequence ID" value="AAB95803"/>
    <property type="gene ID" value="MPN_687"/>
</dbReference>
<dbReference type="KEGG" id="mpn:MPN_687"/>
<dbReference type="PATRIC" id="fig|272634.6.peg.754"/>
<dbReference type="HOGENOM" id="CLU_1110476_0_0_14"/>
<dbReference type="OrthoDB" id="401389at2"/>
<dbReference type="BioCyc" id="MPNE272634:G1GJ3-1100-MONOMER"/>
<dbReference type="Proteomes" id="UP000000808">
    <property type="component" value="Chromosome"/>
</dbReference>
<evidence type="ECO:0000256" key="1">
    <source>
        <dbReference type="SAM" id="MobiDB-lite"/>
    </source>
</evidence>
<organism>
    <name type="scientific">Mycoplasma pneumoniae (strain ATCC 29342 / M129 / Subtype 1)</name>
    <name type="common">Mycoplasmoides pneumoniae</name>
    <dbReference type="NCBI Taxonomy" id="272634"/>
    <lineage>
        <taxon>Bacteria</taxon>
        <taxon>Bacillati</taxon>
        <taxon>Mycoplasmatota</taxon>
        <taxon>Mycoplasmoidales</taxon>
        <taxon>Mycoplasmoidaceae</taxon>
        <taxon>Mycoplasmoides</taxon>
    </lineage>
</organism>
<reference key="1">
    <citation type="journal article" date="1996" name="Nucleic Acids Res.">
        <title>Sequence analysis of 56 kb from the genome of the bacterium Mycoplasma pneumoniae comprising the dnaA region, the atp operon and a cluster of ribosomal protein genes.</title>
        <authorList>
            <person name="Hilbert H."/>
            <person name="Himmelreich R."/>
            <person name="Plagens H."/>
            <person name="Herrmann R."/>
        </authorList>
    </citation>
    <scope>NUCLEOTIDE SEQUENCE [GENOMIC DNA]</scope>
    <source>
        <strain>ATCC 29342 / M129 / Subtype 1</strain>
    </source>
</reference>
<reference key="2">
    <citation type="journal article" date="1996" name="Nucleic Acids Res.">
        <title>Complete sequence analysis of the genome of the bacterium Mycoplasma pneumoniae.</title>
        <authorList>
            <person name="Himmelreich R."/>
            <person name="Hilbert H."/>
            <person name="Plagens H."/>
            <person name="Pirkl E."/>
            <person name="Li B.-C."/>
            <person name="Herrmann R."/>
        </authorList>
    </citation>
    <scope>NUCLEOTIDE SEQUENCE [LARGE SCALE GENOMIC DNA]</scope>
    <source>
        <strain>ATCC 29342 / M129 / Subtype 1</strain>
    </source>
</reference>
<reference key="3">
    <citation type="journal article" date="2000" name="Electrophoresis">
        <title>Towards a two-dimensional proteome map of Mycoplasma pneumoniae.</title>
        <authorList>
            <person name="Regula J.T."/>
            <person name="Ueberle B."/>
            <person name="Boguth G."/>
            <person name="Goerg A."/>
            <person name="Schnoelzer M."/>
            <person name="Herrmann R."/>
            <person name="Frank R."/>
        </authorList>
    </citation>
    <scope>IDENTIFICATION BY MASS SPECTROMETRY</scope>
    <source>
        <strain>ATCC 29342 / M129 / Subtype 1</strain>
    </source>
</reference>
<sequence>MAISKKKRFFFDLAQDEDDAETVQEVKKVEQQLKLEPVVQPQHDLTNQTKANQSSQDRKFFSKDMPQFDFGPLLKFGDEFVKSFNQFPKQEPQTSTQPVNVQPQSEPTNFNNQVPTQPVHQTAEVHLNEFQQPTTTNFNQQPVATSNIQVEATQPIVEPVPQPEPQPAVEQPQVKQTTRPSNKLQEEENLPPPKAKVPGIIPLERQERLTTGVHFYTSTRVWNKVKRYAKAVNIPISRILTMILDQVIEE</sequence>
<proteinExistence type="evidence at protein level"/>
<feature type="chain" id="PRO_0000210705" description="Uncharacterized protein MPN_687">
    <location>
        <begin position="1"/>
        <end position="250"/>
    </location>
</feature>
<feature type="region of interest" description="Disordered" evidence="1">
    <location>
        <begin position="85"/>
        <end position="107"/>
    </location>
</feature>
<feature type="region of interest" description="Disordered" evidence="1">
    <location>
        <begin position="158"/>
        <end position="198"/>
    </location>
</feature>
<feature type="compositionally biased region" description="Low complexity" evidence="1">
    <location>
        <begin position="167"/>
        <end position="176"/>
    </location>
</feature>
<keyword id="KW-1185">Reference proteome</keyword>
<name>Y687_MYCPN</name>
<protein>
    <recommendedName>
        <fullName>Uncharacterized protein MPN_687</fullName>
    </recommendedName>
</protein>